<reference key="1">
    <citation type="journal article" date="1996" name="Science">
        <title>Complete genome sequence of the methanogenic archaeon, Methanococcus jannaschii.</title>
        <authorList>
            <person name="Bult C.J."/>
            <person name="White O."/>
            <person name="Olsen G.J."/>
            <person name="Zhou L."/>
            <person name="Fleischmann R.D."/>
            <person name="Sutton G.G."/>
            <person name="Blake J.A."/>
            <person name="FitzGerald L.M."/>
            <person name="Clayton R.A."/>
            <person name="Gocayne J.D."/>
            <person name="Kerlavage A.R."/>
            <person name="Dougherty B.A."/>
            <person name="Tomb J.-F."/>
            <person name="Adams M.D."/>
            <person name="Reich C.I."/>
            <person name="Overbeek R."/>
            <person name="Kirkness E.F."/>
            <person name="Weinstock K.G."/>
            <person name="Merrick J.M."/>
            <person name="Glodek A."/>
            <person name="Scott J.L."/>
            <person name="Geoghagen N.S.M."/>
            <person name="Weidman J.F."/>
            <person name="Fuhrmann J.L."/>
            <person name="Nguyen D."/>
            <person name="Utterback T.R."/>
            <person name="Kelley J.M."/>
            <person name="Peterson J.D."/>
            <person name="Sadow P.W."/>
            <person name="Hanna M.C."/>
            <person name="Cotton M.D."/>
            <person name="Roberts K.M."/>
            <person name="Hurst M.A."/>
            <person name="Kaine B.P."/>
            <person name="Borodovsky M."/>
            <person name="Klenk H.-P."/>
            <person name="Fraser C.M."/>
            <person name="Smith H.O."/>
            <person name="Woese C.R."/>
            <person name="Venter J.C."/>
        </authorList>
    </citation>
    <scope>NUCLEOTIDE SEQUENCE [LARGE SCALE GENOMIC DNA]</scope>
    <source>
        <strain>ATCC 43067 / DSM 2661 / JAL-1 / JCM 10045 / NBRC 100440</strain>
    </source>
</reference>
<reference key="2">
    <citation type="journal article" date="2000" name="Acta Crystallogr. D">
        <title>Nucleoside diphosphate kinase from the hyperthermophilic archaeon Methanococcus jannaschii: overexpression, crystallization and preliminary X-ray crystallographic analysis.</title>
        <authorList>
            <person name="Min K."/>
            <person name="Song H.K."/>
            <person name="Chang C."/>
            <person name="Lee J.Y."/>
            <person name="Eom S.H."/>
            <person name="Kim K.K."/>
            <person name="Yu Y.G."/>
            <person name="Suh S.W."/>
        </authorList>
    </citation>
    <scope>X-RAY CRYSTALLOGRAPHY (2.3 ANGSTROMS)</scope>
</reference>
<keyword id="KW-0067">ATP-binding</keyword>
<keyword id="KW-0963">Cytoplasm</keyword>
<keyword id="KW-0418">Kinase</keyword>
<keyword id="KW-0460">Magnesium</keyword>
<keyword id="KW-0479">Metal-binding</keyword>
<keyword id="KW-0546">Nucleotide metabolism</keyword>
<keyword id="KW-0547">Nucleotide-binding</keyword>
<keyword id="KW-0597">Phosphoprotein</keyword>
<keyword id="KW-1185">Reference proteome</keyword>
<keyword id="KW-0808">Transferase</keyword>
<proteinExistence type="evidence at protein level"/>
<gene>
    <name evidence="1" type="primary">ndk</name>
    <name type="ordered locus">MJ1265</name>
</gene>
<name>NDK_METJA</name>
<protein>
    <recommendedName>
        <fullName evidence="1">Nucleoside diphosphate kinase</fullName>
        <shortName evidence="1">NDK</shortName>
        <shortName evidence="1">NDP kinase</shortName>
        <ecNumber evidence="1">2.7.4.6</ecNumber>
    </recommendedName>
    <alternativeName>
        <fullName evidence="1">Nucleoside-2-P kinase</fullName>
    </alternativeName>
</protein>
<sequence length="140" mass="16224">MKERTFVALKPDAVKRKLIGKIIERFENKGFEIVAMKMIKLDREMAEKYYEEHKGKEFYERLINFMTSGRMIVMVVEGENAISVVRKMIGKTNPAEAEPGTIRGDFALTTPDNIIHASDSKESAEREIKLFFKEDEIFDK</sequence>
<evidence type="ECO:0000255" key="1">
    <source>
        <dbReference type="HAMAP-Rule" id="MF_00451"/>
    </source>
</evidence>
<evidence type="ECO:0000305" key="2"/>
<accession>Q58661</accession>
<organism>
    <name type="scientific">Methanocaldococcus jannaschii (strain ATCC 43067 / DSM 2661 / JAL-1 / JCM 10045 / NBRC 100440)</name>
    <name type="common">Methanococcus jannaschii</name>
    <dbReference type="NCBI Taxonomy" id="243232"/>
    <lineage>
        <taxon>Archaea</taxon>
        <taxon>Methanobacteriati</taxon>
        <taxon>Methanobacteriota</taxon>
        <taxon>Methanomada group</taxon>
        <taxon>Methanococci</taxon>
        <taxon>Methanococcales</taxon>
        <taxon>Methanocaldococcaceae</taxon>
        <taxon>Methanocaldococcus</taxon>
    </lineage>
</organism>
<comment type="function">
    <text evidence="1">Major role in the synthesis of nucleoside triphosphates other than ATP. The ATP gamma phosphate is transferred to the NDP beta phosphate via a ping-pong mechanism, using a phosphorylated active-site intermediate.</text>
</comment>
<comment type="catalytic activity">
    <reaction evidence="1">
        <text>a 2'-deoxyribonucleoside 5'-diphosphate + ATP = a 2'-deoxyribonucleoside 5'-triphosphate + ADP</text>
        <dbReference type="Rhea" id="RHEA:44640"/>
        <dbReference type="ChEBI" id="CHEBI:30616"/>
        <dbReference type="ChEBI" id="CHEBI:61560"/>
        <dbReference type="ChEBI" id="CHEBI:73316"/>
        <dbReference type="ChEBI" id="CHEBI:456216"/>
        <dbReference type="EC" id="2.7.4.6"/>
    </reaction>
</comment>
<comment type="catalytic activity">
    <reaction evidence="1">
        <text>a ribonucleoside 5'-diphosphate + ATP = a ribonucleoside 5'-triphosphate + ADP</text>
        <dbReference type="Rhea" id="RHEA:18113"/>
        <dbReference type="ChEBI" id="CHEBI:30616"/>
        <dbReference type="ChEBI" id="CHEBI:57930"/>
        <dbReference type="ChEBI" id="CHEBI:61557"/>
        <dbReference type="ChEBI" id="CHEBI:456216"/>
        <dbReference type="EC" id="2.7.4.6"/>
    </reaction>
</comment>
<comment type="cofactor">
    <cofactor evidence="1">
        <name>Mg(2+)</name>
        <dbReference type="ChEBI" id="CHEBI:18420"/>
    </cofactor>
</comment>
<comment type="subunit">
    <text>Homohexamer.</text>
</comment>
<comment type="subcellular location">
    <subcellularLocation>
        <location evidence="1">Cytoplasm</location>
    </subcellularLocation>
</comment>
<comment type="similarity">
    <text evidence="1 2">Belongs to the NDK family.</text>
</comment>
<feature type="chain" id="PRO_0000137091" description="Nucleoside diphosphate kinase">
    <location>
        <begin position="1"/>
        <end position="140"/>
    </location>
</feature>
<feature type="active site" description="Pros-phosphohistidine intermediate" evidence="1">
    <location>
        <position position="116"/>
    </location>
</feature>
<feature type="binding site" evidence="1">
    <location>
        <position position="10"/>
    </location>
    <ligand>
        <name>ATP</name>
        <dbReference type="ChEBI" id="CHEBI:30616"/>
    </ligand>
</feature>
<feature type="binding site" evidence="1">
    <location>
        <position position="58"/>
    </location>
    <ligand>
        <name>ATP</name>
        <dbReference type="ChEBI" id="CHEBI:30616"/>
    </ligand>
</feature>
<feature type="binding site" evidence="1">
    <location>
        <position position="86"/>
    </location>
    <ligand>
        <name>ATP</name>
        <dbReference type="ChEBI" id="CHEBI:30616"/>
    </ligand>
</feature>
<feature type="binding site" evidence="1">
    <location>
        <position position="92"/>
    </location>
    <ligand>
        <name>ATP</name>
        <dbReference type="ChEBI" id="CHEBI:30616"/>
    </ligand>
</feature>
<feature type="binding site" evidence="1">
    <location>
        <position position="103"/>
    </location>
    <ligand>
        <name>ATP</name>
        <dbReference type="ChEBI" id="CHEBI:30616"/>
    </ligand>
</feature>
<feature type="binding site" evidence="1">
    <location>
        <position position="113"/>
    </location>
    <ligand>
        <name>ATP</name>
        <dbReference type="ChEBI" id="CHEBI:30616"/>
    </ligand>
</feature>
<dbReference type="EC" id="2.7.4.6" evidence="1"/>
<dbReference type="EMBL" id="L77117">
    <property type="protein sequence ID" value="AAB99271.1"/>
    <property type="molecule type" value="Genomic_DNA"/>
</dbReference>
<dbReference type="PIR" id="H64457">
    <property type="entry name" value="H64457"/>
</dbReference>
<dbReference type="RefSeq" id="WP_010870778.1">
    <property type="nucleotide sequence ID" value="NC_000909.1"/>
</dbReference>
<dbReference type="SMR" id="Q58661"/>
<dbReference type="FunCoup" id="Q58661">
    <property type="interactions" value="289"/>
</dbReference>
<dbReference type="STRING" id="243232.MJ_1265"/>
<dbReference type="PaxDb" id="243232-MJ_1265"/>
<dbReference type="EnsemblBacteria" id="AAB99271">
    <property type="protein sequence ID" value="AAB99271"/>
    <property type="gene ID" value="MJ_1265"/>
</dbReference>
<dbReference type="GeneID" id="1452163"/>
<dbReference type="KEGG" id="mja:MJ_1265"/>
<dbReference type="eggNOG" id="arCOG04313">
    <property type="taxonomic scope" value="Archaea"/>
</dbReference>
<dbReference type="HOGENOM" id="CLU_060216_6_3_2"/>
<dbReference type="InParanoid" id="Q58661"/>
<dbReference type="OrthoDB" id="6874at2157"/>
<dbReference type="PhylomeDB" id="Q58661"/>
<dbReference type="BRENDA" id="2.7.4.6">
    <property type="organism ID" value="3260"/>
</dbReference>
<dbReference type="Proteomes" id="UP000000805">
    <property type="component" value="Chromosome"/>
</dbReference>
<dbReference type="GO" id="GO:0005737">
    <property type="term" value="C:cytoplasm"/>
    <property type="evidence" value="ECO:0007669"/>
    <property type="project" value="UniProtKB-SubCell"/>
</dbReference>
<dbReference type="GO" id="GO:0005524">
    <property type="term" value="F:ATP binding"/>
    <property type="evidence" value="ECO:0007669"/>
    <property type="project" value="UniProtKB-UniRule"/>
</dbReference>
<dbReference type="GO" id="GO:0046872">
    <property type="term" value="F:metal ion binding"/>
    <property type="evidence" value="ECO:0007669"/>
    <property type="project" value="UniProtKB-KW"/>
</dbReference>
<dbReference type="GO" id="GO:0004550">
    <property type="term" value="F:nucleoside diphosphate kinase activity"/>
    <property type="evidence" value="ECO:0007669"/>
    <property type="project" value="UniProtKB-UniRule"/>
</dbReference>
<dbReference type="GO" id="GO:0006241">
    <property type="term" value="P:CTP biosynthetic process"/>
    <property type="evidence" value="ECO:0007669"/>
    <property type="project" value="UniProtKB-UniRule"/>
</dbReference>
<dbReference type="GO" id="GO:0006183">
    <property type="term" value="P:GTP biosynthetic process"/>
    <property type="evidence" value="ECO:0007669"/>
    <property type="project" value="UniProtKB-UniRule"/>
</dbReference>
<dbReference type="GO" id="GO:0006228">
    <property type="term" value="P:UTP biosynthetic process"/>
    <property type="evidence" value="ECO:0007669"/>
    <property type="project" value="UniProtKB-UniRule"/>
</dbReference>
<dbReference type="CDD" id="cd04413">
    <property type="entry name" value="NDPk_I"/>
    <property type="match status" value="1"/>
</dbReference>
<dbReference type="FunFam" id="3.30.70.141:FF:000003">
    <property type="entry name" value="Nucleoside diphosphate kinase"/>
    <property type="match status" value="1"/>
</dbReference>
<dbReference type="Gene3D" id="3.30.70.141">
    <property type="entry name" value="Nucleoside diphosphate kinase-like domain"/>
    <property type="match status" value="1"/>
</dbReference>
<dbReference type="HAMAP" id="MF_00451">
    <property type="entry name" value="NDP_kinase"/>
    <property type="match status" value="1"/>
</dbReference>
<dbReference type="InterPro" id="IPR034907">
    <property type="entry name" value="NDK-like_dom"/>
</dbReference>
<dbReference type="InterPro" id="IPR036850">
    <property type="entry name" value="NDK-like_dom_sf"/>
</dbReference>
<dbReference type="InterPro" id="IPR001564">
    <property type="entry name" value="Nucleoside_diP_kinase"/>
</dbReference>
<dbReference type="InterPro" id="IPR023005">
    <property type="entry name" value="Nucleoside_diP_kinase_AS"/>
</dbReference>
<dbReference type="NCBIfam" id="NF001908">
    <property type="entry name" value="PRK00668.1"/>
    <property type="match status" value="1"/>
</dbReference>
<dbReference type="NCBIfam" id="NF011112">
    <property type="entry name" value="PRK14540.1"/>
    <property type="match status" value="1"/>
</dbReference>
<dbReference type="PANTHER" id="PTHR11349">
    <property type="entry name" value="NUCLEOSIDE DIPHOSPHATE KINASE"/>
    <property type="match status" value="1"/>
</dbReference>
<dbReference type="Pfam" id="PF00334">
    <property type="entry name" value="NDK"/>
    <property type="match status" value="1"/>
</dbReference>
<dbReference type="PRINTS" id="PR01243">
    <property type="entry name" value="NUCDPKINASE"/>
</dbReference>
<dbReference type="SMART" id="SM00562">
    <property type="entry name" value="NDK"/>
    <property type="match status" value="1"/>
</dbReference>
<dbReference type="SUPFAM" id="SSF54919">
    <property type="entry name" value="Nucleoside diphosphate kinase, NDK"/>
    <property type="match status" value="1"/>
</dbReference>
<dbReference type="PROSITE" id="PS00469">
    <property type="entry name" value="NDPK"/>
    <property type="match status" value="1"/>
</dbReference>
<dbReference type="PROSITE" id="PS51374">
    <property type="entry name" value="NDPK_LIKE"/>
    <property type="match status" value="1"/>
</dbReference>